<comment type="function">
    <text evidence="1">Involved in DNA repair and RecF pathway recombination.</text>
</comment>
<comment type="similarity">
    <text evidence="1">Belongs to the RecO family.</text>
</comment>
<evidence type="ECO:0000255" key="1">
    <source>
        <dbReference type="HAMAP-Rule" id="MF_00201"/>
    </source>
</evidence>
<name>RECO_BEUC1</name>
<proteinExistence type="inferred from homology"/>
<sequence>MKLYRDEAVVLRTHKLGEADRILTLLTRHHGQVRAVAKGVRRTSSKFGARLEPFGVIDLQLYAGRSLDVVTQVDTLAPHGRSIVGDYALYTTATAMVETAERLTEIEREPATQQYLLLVGALRALAERAHAPTLVLDSYLLRSLAVAGWAPTFTDCARCSREGPHRAFSAPMGGALCQACRPPGAAAPAAETFLLLGALLAGDWALADASDERHRRESSGLVAAYLQWHLERQLRSLRHVERA</sequence>
<keyword id="KW-0227">DNA damage</keyword>
<keyword id="KW-0233">DNA recombination</keyword>
<keyword id="KW-0234">DNA repair</keyword>
<keyword id="KW-1185">Reference proteome</keyword>
<reference key="1">
    <citation type="journal article" date="2009" name="Stand. Genomic Sci.">
        <title>Complete genome sequence of Beutenbergia cavernae type strain (HKI 0122).</title>
        <authorList>
            <person name="Land M."/>
            <person name="Pukall R."/>
            <person name="Abt B."/>
            <person name="Goker M."/>
            <person name="Rohde M."/>
            <person name="Glavina Del Rio T."/>
            <person name="Tice H."/>
            <person name="Copeland A."/>
            <person name="Cheng J.F."/>
            <person name="Lucas S."/>
            <person name="Chen F."/>
            <person name="Nolan M."/>
            <person name="Bruce D."/>
            <person name="Goodwin L."/>
            <person name="Pitluck S."/>
            <person name="Ivanova N."/>
            <person name="Mavromatis K."/>
            <person name="Ovchinnikova G."/>
            <person name="Pati A."/>
            <person name="Chen A."/>
            <person name="Palaniappan K."/>
            <person name="Hauser L."/>
            <person name="Chang Y.J."/>
            <person name="Jefferies C.C."/>
            <person name="Saunders E."/>
            <person name="Brettin T."/>
            <person name="Detter J.C."/>
            <person name="Han C."/>
            <person name="Chain P."/>
            <person name="Bristow J."/>
            <person name="Eisen J.A."/>
            <person name="Markowitz V."/>
            <person name="Hugenholtz P."/>
            <person name="Kyrpides N.C."/>
            <person name="Klenk H.P."/>
            <person name="Lapidus A."/>
        </authorList>
    </citation>
    <scope>NUCLEOTIDE SEQUENCE [LARGE SCALE GENOMIC DNA]</scope>
    <source>
        <strain>ATCC BAA-8 / DSM 12333 / CCUG 43141 / JCM 11478 / NBRC 16432 / NCIMB 13614 / HKI 0122</strain>
    </source>
</reference>
<organism>
    <name type="scientific">Beutenbergia cavernae (strain ATCC BAA-8 / DSM 12333 / CCUG 43141 / JCM 11478 / NBRC 16432 / NCIMB 13614 / HKI 0122)</name>
    <dbReference type="NCBI Taxonomy" id="471853"/>
    <lineage>
        <taxon>Bacteria</taxon>
        <taxon>Bacillati</taxon>
        <taxon>Actinomycetota</taxon>
        <taxon>Actinomycetes</taxon>
        <taxon>Micrococcales</taxon>
        <taxon>Beutenbergiaceae</taxon>
        <taxon>Beutenbergia</taxon>
    </lineage>
</organism>
<feature type="chain" id="PRO_1000204100" description="DNA repair protein RecO">
    <location>
        <begin position="1"/>
        <end position="243"/>
    </location>
</feature>
<accession>C5C4P4</accession>
<dbReference type="EMBL" id="CP001618">
    <property type="protein sequence ID" value="ACQ80022.1"/>
    <property type="molecule type" value="Genomic_DNA"/>
</dbReference>
<dbReference type="RefSeq" id="WP_015882262.1">
    <property type="nucleotide sequence ID" value="NC_012669.1"/>
</dbReference>
<dbReference type="SMR" id="C5C4P4"/>
<dbReference type="STRING" id="471853.Bcav_1766"/>
<dbReference type="KEGG" id="bcv:Bcav_1766"/>
<dbReference type="eggNOG" id="COG1381">
    <property type="taxonomic scope" value="Bacteria"/>
</dbReference>
<dbReference type="HOGENOM" id="CLU_066632_1_1_11"/>
<dbReference type="OrthoDB" id="9812244at2"/>
<dbReference type="Proteomes" id="UP000007962">
    <property type="component" value="Chromosome"/>
</dbReference>
<dbReference type="GO" id="GO:0043590">
    <property type="term" value="C:bacterial nucleoid"/>
    <property type="evidence" value="ECO:0007669"/>
    <property type="project" value="TreeGrafter"/>
</dbReference>
<dbReference type="GO" id="GO:0006310">
    <property type="term" value="P:DNA recombination"/>
    <property type="evidence" value="ECO:0007669"/>
    <property type="project" value="UniProtKB-UniRule"/>
</dbReference>
<dbReference type="GO" id="GO:0006302">
    <property type="term" value="P:double-strand break repair"/>
    <property type="evidence" value="ECO:0007669"/>
    <property type="project" value="TreeGrafter"/>
</dbReference>
<dbReference type="Gene3D" id="2.40.50.140">
    <property type="entry name" value="Nucleic acid-binding proteins"/>
    <property type="match status" value="1"/>
</dbReference>
<dbReference type="Gene3D" id="1.20.1440.120">
    <property type="entry name" value="Recombination protein O, C-terminal domain"/>
    <property type="match status" value="1"/>
</dbReference>
<dbReference type="HAMAP" id="MF_00201">
    <property type="entry name" value="RecO"/>
    <property type="match status" value="1"/>
</dbReference>
<dbReference type="InterPro" id="IPR037278">
    <property type="entry name" value="ARFGAP/RecO"/>
</dbReference>
<dbReference type="InterPro" id="IPR022572">
    <property type="entry name" value="DNA_rep/recomb_RecO_N"/>
</dbReference>
<dbReference type="InterPro" id="IPR012340">
    <property type="entry name" value="NA-bd_OB-fold"/>
</dbReference>
<dbReference type="InterPro" id="IPR003717">
    <property type="entry name" value="RecO"/>
</dbReference>
<dbReference type="InterPro" id="IPR042242">
    <property type="entry name" value="RecO_C"/>
</dbReference>
<dbReference type="NCBIfam" id="TIGR00613">
    <property type="entry name" value="reco"/>
    <property type="match status" value="1"/>
</dbReference>
<dbReference type="PANTHER" id="PTHR33991">
    <property type="entry name" value="DNA REPAIR PROTEIN RECO"/>
    <property type="match status" value="1"/>
</dbReference>
<dbReference type="PANTHER" id="PTHR33991:SF1">
    <property type="entry name" value="DNA REPAIR PROTEIN RECO"/>
    <property type="match status" value="1"/>
</dbReference>
<dbReference type="Pfam" id="PF02565">
    <property type="entry name" value="RecO_C"/>
    <property type="match status" value="1"/>
</dbReference>
<dbReference type="Pfam" id="PF11967">
    <property type="entry name" value="RecO_N"/>
    <property type="match status" value="1"/>
</dbReference>
<dbReference type="SUPFAM" id="SSF57863">
    <property type="entry name" value="ArfGap/RecO-like zinc finger"/>
    <property type="match status" value="1"/>
</dbReference>
<dbReference type="SUPFAM" id="SSF50249">
    <property type="entry name" value="Nucleic acid-binding proteins"/>
    <property type="match status" value="1"/>
</dbReference>
<protein>
    <recommendedName>
        <fullName evidence="1">DNA repair protein RecO</fullName>
    </recommendedName>
    <alternativeName>
        <fullName evidence="1">Recombination protein O</fullName>
    </alternativeName>
</protein>
<gene>
    <name evidence="1" type="primary">recO</name>
    <name type="ordered locus">Bcav_1766</name>
</gene>